<comment type="function">
    <text evidence="2">Catalyzes the adenosylmethionine-dependent methylation of the exocyclic amino group (N(2)) of guanosine at position 10 of various tRNAs. Acts via a two-step process that leads to the formation of either N(2)-monomethyl (m(2)G) or N(2)-dimethylguanosine (m(2)(2)G).</text>
</comment>
<comment type="catalytic activity">
    <reaction evidence="2">
        <text>guanosine(10) in tRNA + 2 S-adenosyl-L-methionine = N(2)-dimethylguanosine(10) in tRNA + 2 S-adenosyl-L-homocysteine + 2 H(+)</text>
        <dbReference type="Rhea" id="RHEA:43124"/>
        <dbReference type="Rhea" id="RHEA-COMP:10355"/>
        <dbReference type="Rhea" id="RHEA-COMP:10358"/>
        <dbReference type="ChEBI" id="CHEBI:15378"/>
        <dbReference type="ChEBI" id="CHEBI:57856"/>
        <dbReference type="ChEBI" id="CHEBI:59789"/>
        <dbReference type="ChEBI" id="CHEBI:74269"/>
        <dbReference type="ChEBI" id="CHEBI:74513"/>
        <dbReference type="EC" id="2.1.1.213"/>
    </reaction>
</comment>
<comment type="biophysicochemical properties">
    <temperatureDependence>
        <text evidence="2">Hyperthermostable. Remains fully active after 2 hours of incubation at 80 degrees Celsius.</text>
    </temperatureDependence>
</comment>
<comment type="subunit">
    <text evidence="2">Monomer.</text>
</comment>
<comment type="subcellular location">
    <subcellularLocation>
        <location evidence="3">Cytoplasm</location>
    </subcellularLocation>
</comment>
<comment type="similarity">
    <text evidence="3">Belongs to the methyltransferase superfamily. Trm-G10 family.</text>
</comment>
<comment type="sequence caution" evidence="3">
    <conflict type="erroneous initiation">
        <sequence resource="EMBL-CDS" id="CAB50528"/>
    </conflict>
    <text>Extended N-terminus.</text>
</comment>
<evidence type="ECO:0000255" key="1">
    <source>
        <dbReference type="PROSITE-ProRule" id="PRU00529"/>
    </source>
</evidence>
<evidence type="ECO:0000269" key="2">
    <source>
    </source>
</evidence>
<evidence type="ECO:0000305" key="3"/>
<keyword id="KW-0963">Cytoplasm</keyword>
<keyword id="KW-0489">Methyltransferase</keyword>
<keyword id="KW-0694">RNA-binding</keyword>
<keyword id="KW-0949">S-adenosyl-L-methionine</keyword>
<keyword id="KW-0808">Transferase</keyword>
<keyword id="KW-0819">tRNA processing</keyword>
<keyword id="KW-0820">tRNA-binding</keyword>
<accession>Q9UY84</accession>
<accession>G8ZJX8</accession>
<reference key="1">
    <citation type="journal article" date="2003" name="Mol. Microbiol.">
        <title>An integrated analysis of the genome of the hyperthermophilic archaeon Pyrococcus abyssi.</title>
        <authorList>
            <person name="Cohen G.N."/>
            <person name="Barbe V."/>
            <person name="Flament D."/>
            <person name="Galperin M."/>
            <person name="Heilig R."/>
            <person name="Lecompte O."/>
            <person name="Poch O."/>
            <person name="Prieur D."/>
            <person name="Querellou J."/>
            <person name="Ripp R."/>
            <person name="Thierry J.-C."/>
            <person name="Van der Oost J."/>
            <person name="Weissenbach J."/>
            <person name="Zivanovic Y."/>
            <person name="Forterre P."/>
        </authorList>
    </citation>
    <scope>NUCLEOTIDE SEQUENCE [LARGE SCALE GENOMIC DNA]</scope>
    <source>
        <strain>GE5 / Orsay</strain>
    </source>
</reference>
<reference key="2">
    <citation type="journal article" date="2012" name="Curr. Microbiol.">
        <title>Re-annotation of two hyperthermophilic archaea Pyrococcus abyssi GE5 and Pyrococcus furiosus DSM 3638.</title>
        <authorList>
            <person name="Gao J."/>
            <person name="Wang J."/>
        </authorList>
    </citation>
    <scope>GENOME REANNOTATION</scope>
    <source>
        <strain>GE5 / Orsay</strain>
    </source>
</reference>
<reference key="3">
    <citation type="journal article" date="2004" name="J. Biol. Chem.">
        <title>N2-methylation of guanosine at position 10 in tRNA is catalyzed by a THUMP domain-containing, S-adenosylmethionine-dependent methyltransferase, conserved in Archaea and Eukaryota.</title>
        <authorList>
            <person name="Armengaud J."/>
            <person name="Urbonavicius J."/>
            <person name="Fernandez B."/>
            <person name="Chaussinand G."/>
            <person name="Bujnicki J.M."/>
            <person name="Grosjean H."/>
        </authorList>
    </citation>
    <scope>FUNCTION</scope>
    <scope>CATALYTIC ACTIVITY</scope>
    <scope>TRNA-BINDING</scope>
    <scope>GENE NAME</scope>
    <scope>TEMPERATURE DEPENDENCE</scope>
    <scope>SUBUNIT</scope>
    <source>
        <strain>GE5 / Orsay</strain>
    </source>
</reference>
<name>TMG10_PYRAB</name>
<feature type="chain" id="PRO_0000406916" description="tRNA (guanine(10)-N2)-dimethyltransferase">
    <location>
        <begin position="1"/>
        <end position="329"/>
    </location>
</feature>
<feature type="domain" description="THUMP" evidence="1">
    <location>
        <begin position="40"/>
        <end position="143"/>
    </location>
</feature>
<gene>
    <name type="primary">trmG10</name>
    <name type="ordered locus">PYRAB16240</name>
    <name type="ORF">PAB1283</name>
</gene>
<protein>
    <recommendedName>
        <fullName>tRNA (guanine(10)-N2)-dimethyltransferase</fullName>
        <ecNumber>2.1.1.213</ecNumber>
    </recommendedName>
    <alternativeName>
        <fullName>(Pab)Trm-G10</fullName>
    </alternativeName>
    <alternativeName>
        <fullName>tRNA:G10 dimethyltransferase</fullName>
    </alternativeName>
</protein>
<sequence>MFYVEILGLLPEMAEAEVKALAELRNGTIKERDYLLVVGNVENVEIFERLGLAHEYGILLGSGDDVRDILDLVRGLEWKEIIKGTFAVRKEVMVNCAHEVKNLEKIIGGIIHSQGLRVNLSKPDTIIKVYCGRKLWIGIRIREFRGKEFDERKADRRPFSRPIALPPRIARAMVNLTRATREILDPFMGTGGMLIEAGLMGLKVYGIDIREDMVEGAKINLEYYGVKDYVVKVGDATKIKEAFPGKTFEAIATDPPYGTSTTLPMDRDELYKRALESMYSVLEGRLAIAFPSDFDALDVAETIGFKVIGRFYQRVHSSLSRYFYIMEAR</sequence>
<proteinExistence type="evidence at protein level"/>
<organism>
    <name type="scientific">Pyrococcus abyssi (strain GE5 / Orsay)</name>
    <dbReference type="NCBI Taxonomy" id="272844"/>
    <lineage>
        <taxon>Archaea</taxon>
        <taxon>Methanobacteriati</taxon>
        <taxon>Methanobacteriota</taxon>
        <taxon>Thermococci</taxon>
        <taxon>Thermococcales</taxon>
        <taxon>Thermococcaceae</taxon>
        <taxon>Pyrococcus</taxon>
    </lineage>
</organism>
<dbReference type="EC" id="2.1.1.213"/>
<dbReference type="EMBL" id="AJ248288">
    <property type="protein sequence ID" value="CAB50528.1"/>
    <property type="status" value="ALT_INIT"/>
    <property type="molecule type" value="Genomic_DNA"/>
</dbReference>
<dbReference type="EMBL" id="HE613800">
    <property type="protein sequence ID" value="CCE71085.1"/>
    <property type="molecule type" value="Genomic_DNA"/>
</dbReference>
<dbReference type="PIR" id="B75011">
    <property type="entry name" value="B75011"/>
</dbReference>
<dbReference type="RefSeq" id="WP_164490413.1">
    <property type="nucleotide sequence ID" value="NC_000868.1"/>
</dbReference>
<dbReference type="SMR" id="Q9UY84"/>
<dbReference type="STRING" id="272844.PAB1283"/>
<dbReference type="KEGG" id="pab:PAB1283"/>
<dbReference type="PATRIC" id="fig|272844.11.peg.1734"/>
<dbReference type="eggNOG" id="arCOG00047">
    <property type="taxonomic scope" value="Archaea"/>
</dbReference>
<dbReference type="HOGENOM" id="CLU_057819_1_0_2"/>
<dbReference type="OrthoDB" id="7080at2157"/>
<dbReference type="BioCyc" id="MetaCyc:MONOMER-16615"/>
<dbReference type="BRENDA" id="2.1.1.213">
    <property type="organism ID" value="5242"/>
</dbReference>
<dbReference type="Proteomes" id="UP000000810">
    <property type="component" value="Chromosome"/>
</dbReference>
<dbReference type="Proteomes" id="UP000009139">
    <property type="component" value="Chromosome"/>
</dbReference>
<dbReference type="GO" id="GO:0005737">
    <property type="term" value="C:cytoplasm"/>
    <property type="evidence" value="ECO:0007669"/>
    <property type="project" value="UniProtKB-SubCell"/>
</dbReference>
<dbReference type="GO" id="GO:0160101">
    <property type="term" value="F:tRNA (guanine(10)-N2)-dimethyltransferase activity"/>
    <property type="evidence" value="ECO:0007669"/>
    <property type="project" value="UniProtKB-EC"/>
</dbReference>
<dbReference type="GO" id="GO:0160102">
    <property type="term" value="F:tRNA (guanine(10)-N2)-methyltransferase activity"/>
    <property type="evidence" value="ECO:0000314"/>
    <property type="project" value="UniProtKB"/>
</dbReference>
<dbReference type="GO" id="GO:0000049">
    <property type="term" value="F:tRNA binding"/>
    <property type="evidence" value="ECO:0007669"/>
    <property type="project" value="UniProtKB-KW"/>
</dbReference>
<dbReference type="GO" id="GO:0030488">
    <property type="term" value="P:tRNA methylation"/>
    <property type="evidence" value="ECO:0007669"/>
    <property type="project" value="InterPro"/>
</dbReference>
<dbReference type="GO" id="GO:0008033">
    <property type="term" value="P:tRNA processing"/>
    <property type="evidence" value="ECO:0000314"/>
    <property type="project" value="UniProtKB"/>
</dbReference>
<dbReference type="CDD" id="cd02440">
    <property type="entry name" value="AdoMet_MTases"/>
    <property type="match status" value="1"/>
</dbReference>
<dbReference type="CDD" id="cd11715">
    <property type="entry name" value="THUMP_AdoMetMT"/>
    <property type="match status" value="1"/>
</dbReference>
<dbReference type="FunFam" id="3.40.50.150:FF:000251">
    <property type="entry name" value="Putative RNA methylase"/>
    <property type="match status" value="1"/>
</dbReference>
<dbReference type="Gene3D" id="3.40.50.150">
    <property type="entry name" value="Vaccinia Virus protein VP39"/>
    <property type="match status" value="1"/>
</dbReference>
<dbReference type="InterPro" id="IPR002052">
    <property type="entry name" value="DNA_methylase_N6_adenine_CS"/>
</dbReference>
<dbReference type="InterPro" id="IPR000241">
    <property type="entry name" value="RlmKL-like_Mtase"/>
</dbReference>
<dbReference type="InterPro" id="IPR029063">
    <property type="entry name" value="SAM-dependent_MTases_sf"/>
</dbReference>
<dbReference type="InterPro" id="IPR004114">
    <property type="entry name" value="THUMP_dom"/>
</dbReference>
<dbReference type="InterPro" id="IPR005885">
    <property type="entry name" value="TrmG10"/>
</dbReference>
<dbReference type="NCBIfam" id="TIGR01177">
    <property type="entry name" value="TIGR01177 family methyltransferase"/>
    <property type="match status" value="1"/>
</dbReference>
<dbReference type="PANTHER" id="PTHR14911:SF21">
    <property type="entry name" value="N2-METHYLGUANOSINE TRNA METHYLTRANSFERASE"/>
    <property type="match status" value="1"/>
</dbReference>
<dbReference type="PANTHER" id="PTHR14911">
    <property type="entry name" value="THUMP DOMAIN-CONTAINING"/>
    <property type="match status" value="1"/>
</dbReference>
<dbReference type="Pfam" id="PF02926">
    <property type="entry name" value="THUMP"/>
    <property type="match status" value="1"/>
</dbReference>
<dbReference type="Pfam" id="PF01170">
    <property type="entry name" value="UPF0020"/>
    <property type="match status" value="1"/>
</dbReference>
<dbReference type="SMART" id="SM00981">
    <property type="entry name" value="THUMP"/>
    <property type="match status" value="1"/>
</dbReference>
<dbReference type="SUPFAM" id="SSF53335">
    <property type="entry name" value="S-adenosyl-L-methionine-dependent methyltransferases"/>
    <property type="match status" value="1"/>
</dbReference>
<dbReference type="SUPFAM" id="SSF143437">
    <property type="entry name" value="THUMP domain-like"/>
    <property type="match status" value="1"/>
</dbReference>
<dbReference type="PROSITE" id="PS51165">
    <property type="entry name" value="THUMP"/>
    <property type="match status" value="1"/>
</dbReference>